<feature type="chain" id="PRO_1000190301" description="RNA-binding protein Hfq">
    <location>
        <begin position="1"/>
        <end position="74"/>
    </location>
</feature>
<feature type="domain" description="Sm" evidence="2">
    <location>
        <begin position="9"/>
        <end position="69"/>
    </location>
</feature>
<evidence type="ECO:0000255" key="1">
    <source>
        <dbReference type="HAMAP-Rule" id="MF_00436"/>
    </source>
</evidence>
<evidence type="ECO:0000255" key="2">
    <source>
        <dbReference type="PROSITE-ProRule" id="PRU01346"/>
    </source>
</evidence>
<sequence>MKNTINIQDQFLNQLRKEETTVTVFLLNGFQLRGLVKGFDNFTVLLEVDGRQQLIYKHAISTFAPQKNVKIEIE</sequence>
<dbReference type="EMBL" id="CP000922">
    <property type="protein sequence ID" value="ACJ33883.1"/>
    <property type="molecule type" value="Genomic_DNA"/>
</dbReference>
<dbReference type="RefSeq" id="WP_012575112.1">
    <property type="nucleotide sequence ID" value="NC_011567.1"/>
</dbReference>
<dbReference type="SMR" id="B7GIA1"/>
<dbReference type="STRING" id="491915.Aflv_1517"/>
<dbReference type="GeneID" id="7037772"/>
<dbReference type="KEGG" id="afl:Aflv_1517"/>
<dbReference type="eggNOG" id="COG1923">
    <property type="taxonomic scope" value="Bacteria"/>
</dbReference>
<dbReference type="HOGENOM" id="CLU_113688_3_0_9"/>
<dbReference type="Proteomes" id="UP000000742">
    <property type="component" value="Chromosome"/>
</dbReference>
<dbReference type="GO" id="GO:0005829">
    <property type="term" value="C:cytosol"/>
    <property type="evidence" value="ECO:0007669"/>
    <property type="project" value="TreeGrafter"/>
</dbReference>
<dbReference type="GO" id="GO:0003723">
    <property type="term" value="F:RNA binding"/>
    <property type="evidence" value="ECO:0007669"/>
    <property type="project" value="UniProtKB-UniRule"/>
</dbReference>
<dbReference type="GO" id="GO:0006355">
    <property type="term" value="P:regulation of DNA-templated transcription"/>
    <property type="evidence" value="ECO:0007669"/>
    <property type="project" value="InterPro"/>
</dbReference>
<dbReference type="GO" id="GO:0043487">
    <property type="term" value="P:regulation of RNA stability"/>
    <property type="evidence" value="ECO:0007669"/>
    <property type="project" value="TreeGrafter"/>
</dbReference>
<dbReference type="GO" id="GO:0045974">
    <property type="term" value="P:regulation of translation, ncRNA-mediated"/>
    <property type="evidence" value="ECO:0007669"/>
    <property type="project" value="TreeGrafter"/>
</dbReference>
<dbReference type="CDD" id="cd01716">
    <property type="entry name" value="Hfq"/>
    <property type="match status" value="1"/>
</dbReference>
<dbReference type="FunFam" id="2.30.30.100:FF:000012">
    <property type="entry name" value="RNA-binding protein Hfq"/>
    <property type="match status" value="1"/>
</dbReference>
<dbReference type="Gene3D" id="2.30.30.100">
    <property type="match status" value="1"/>
</dbReference>
<dbReference type="HAMAP" id="MF_00436">
    <property type="entry name" value="Hfq"/>
    <property type="match status" value="1"/>
</dbReference>
<dbReference type="InterPro" id="IPR005001">
    <property type="entry name" value="Hfq"/>
</dbReference>
<dbReference type="InterPro" id="IPR010920">
    <property type="entry name" value="LSM_dom_sf"/>
</dbReference>
<dbReference type="InterPro" id="IPR047575">
    <property type="entry name" value="Sm"/>
</dbReference>
<dbReference type="NCBIfam" id="TIGR02383">
    <property type="entry name" value="Hfq"/>
    <property type="match status" value="1"/>
</dbReference>
<dbReference type="NCBIfam" id="NF001602">
    <property type="entry name" value="PRK00395.1"/>
    <property type="match status" value="1"/>
</dbReference>
<dbReference type="PANTHER" id="PTHR34772">
    <property type="entry name" value="RNA-BINDING PROTEIN HFQ"/>
    <property type="match status" value="1"/>
</dbReference>
<dbReference type="PANTHER" id="PTHR34772:SF1">
    <property type="entry name" value="RNA-BINDING PROTEIN HFQ"/>
    <property type="match status" value="1"/>
</dbReference>
<dbReference type="Pfam" id="PF17209">
    <property type="entry name" value="Hfq"/>
    <property type="match status" value="1"/>
</dbReference>
<dbReference type="SUPFAM" id="SSF50182">
    <property type="entry name" value="Sm-like ribonucleoproteins"/>
    <property type="match status" value="1"/>
</dbReference>
<dbReference type="PROSITE" id="PS52002">
    <property type="entry name" value="SM"/>
    <property type="match status" value="1"/>
</dbReference>
<keyword id="KW-0694">RNA-binding</keyword>
<keyword id="KW-0346">Stress response</keyword>
<reference key="1">
    <citation type="journal article" date="2008" name="Genome Biol.">
        <title>Encapsulated in silica: genome, proteome and physiology of the thermophilic bacterium Anoxybacillus flavithermus WK1.</title>
        <authorList>
            <person name="Saw J.H."/>
            <person name="Mountain B.W."/>
            <person name="Feng L."/>
            <person name="Omelchenko M.V."/>
            <person name="Hou S."/>
            <person name="Saito J.A."/>
            <person name="Stott M.B."/>
            <person name="Li D."/>
            <person name="Zhao G."/>
            <person name="Wu J."/>
            <person name="Galperin M.Y."/>
            <person name="Koonin E.V."/>
            <person name="Makarova K.S."/>
            <person name="Wolf Y.I."/>
            <person name="Rigden D.J."/>
            <person name="Dunfield P.F."/>
            <person name="Wang L."/>
            <person name="Alam M."/>
        </authorList>
    </citation>
    <scope>NUCLEOTIDE SEQUENCE [LARGE SCALE GENOMIC DNA]</scope>
    <source>
        <strain>DSM 21510 / WK1</strain>
    </source>
</reference>
<comment type="function">
    <text evidence="1">RNA chaperone that binds small regulatory RNA (sRNAs) and mRNAs to facilitate mRNA translational regulation in response to envelope stress, environmental stress and changes in metabolite concentrations. Also binds with high specificity to tRNAs.</text>
</comment>
<comment type="subunit">
    <text evidence="1">Homohexamer.</text>
</comment>
<comment type="similarity">
    <text evidence="1">Belongs to the Hfq family.</text>
</comment>
<organism>
    <name type="scientific">Anoxybacillus flavithermus (strain DSM 21510 / WK1)</name>
    <dbReference type="NCBI Taxonomy" id="491915"/>
    <lineage>
        <taxon>Bacteria</taxon>
        <taxon>Bacillati</taxon>
        <taxon>Bacillota</taxon>
        <taxon>Bacilli</taxon>
        <taxon>Bacillales</taxon>
        <taxon>Anoxybacillaceae</taxon>
        <taxon>Anoxybacillus</taxon>
    </lineage>
</organism>
<name>HFQ_ANOFW</name>
<protein>
    <recommendedName>
        <fullName evidence="1">RNA-binding protein Hfq</fullName>
    </recommendedName>
</protein>
<accession>B7GIA1</accession>
<proteinExistence type="inferred from homology"/>
<gene>
    <name evidence="1" type="primary">hfq</name>
    <name type="ordered locus">Aflv_1517</name>
</gene>